<reference key="1">
    <citation type="journal article" date="2008" name="J. Bacteriol.">
        <title>Genome sequence of Staphylococcus aureus strain Newman and comparative analysis of staphylococcal genomes: polymorphism and evolution of two major pathogenicity islands.</title>
        <authorList>
            <person name="Baba T."/>
            <person name="Bae T."/>
            <person name="Schneewind O."/>
            <person name="Takeuchi F."/>
            <person name="Hiramatsu K."/>
        </authorList>
    </citation>
    <scope>NUCLEOTIDE SEQUENCE [LARGE SCALE GENOMIC DNA]</scope>
    <source>
        <strain>Newman</strain>
    </source>
</reference>
<organism>
    <name type="scientific">Staphylococcus aureus (strain Newman)</name>
    <dbReference type="NCBI Taxonomy" id="426430"/>
    <lineage>
        <taxon>Bacteria</taxon>
        <taxon>Bacillati</taxon>
        <taxon>Bacillota</taxon>
        <taxon>Bacilli</taxon>
        <taxon>Bacillales</taxon>
        <taxon>Staphylococcaceae</taxon>
        <taxon>Staphylococcus</taxon>
    </lineage>
</organism>
<evidence type="ECO:0000255" key="1">
    <source>
        <dbReference type="HAMAP-Rule" id="MF_00184"/>
    </source>
</evidence>
<evidence type="ECO:0000255" key="2">
    <source>
        <dbReference type="PROSITE-ProRule" id="PRU01228"/>
    </source>
</evidence>
<proteinExistence type="inferred from homology"/>
<keyword id="KW-0030">Aminoacyl-tRNA synthetase</keyword>
<keyword id="KW-0067">ATP-binding</keyword>
<keyword id="KW-0963">Cytoplasm</keyword>
<keyword id="KW-0436">Ligase</keyword>
<keyword id="KW-0479">Metal-binding</keyword>
<keyword id="KW-0547">Nucleotide-binding</keyword>
<keyword id="KW-0648">Protein biosynthesis</keyword>
<keyword id="KW-0694">RNA-binding</keyword>
<keyword id="KW-0820">tRNA-binding</keyword>
<keyword id="KW-0862">Zinc</keyword>
<sequence>MEQINIQFPDGNKKAFDKGTTTEDIAQSISPGLRKKAVAGKFNGQLVDLTKPLETDGSIEIVTPGSEEALEVLRHSTAHLMAHAIKRLYGNVKFGVGPVIEGGFYYDFDIDQNISSDDFEQIEKTMKQIVNENMKIERKVVSRDEAKELFSNDEYKLELIDAIPEDENVTLYSQGDFTDLCRGVHVPSTAKIKEFKLLSTAGAYWRGDSNNKMLQRIYGTAFFDKKELKAHLQMLEERKERDHRKIGKELELFTNSQLVGAGLPLWLPNGATIRREIERYIVDKEVSMGYDHVYTPVLANVDLYKTSGHWDHYQEDMFPPMQLDETESMVLRPMNCPHHMMIYANKPHSYRELPIRIAELGTMHRYEASGAVSGLQRVRGMTLNDSHIFVRPDQIKEEFKRVVNMIIDVYKDFGFEDYSFRLSYRDPEDKEKYFDDDDMWNKAENMLKEAADELGLSYEEAIGEAAFYGPKLDVQVKTAMGKEETLSTAQLDFLLPERFDLTYIGQDGEHHRPVVIHRGVVSTMERFVAFLTEETKGAFPTWLAPKQVQIIPVNVDLHYDYARQLQDELKSQGVRVSIDDRNEKMGYKIREAQMQKIPYQIVVGDKEVENNQVNVRQYGSQDQETVEKDEFIWNLVDEIRLKKHR</sequence>
<comment type="function">
    <text evidence="1">Catalyzes the attachment of threonine to tRNA(Thr) in a two-step reaction: L-threonine is first activated by ATP to form Thr-AMP and then transferred to the acceptor end of tRNA(Thr). Also edits incorrectly charged L-seryl-tRNA(Thr).</text>
</comment>
<comment type="catalytic activity">
    <reaction evidence="1">
        <text>tRNA(Thr) + L-threonine + ATP = L-threonyl-tRNA(Thr) + AMP + diphosphate + H(+)</text>
        <dbReference type="Rhea" id="RHEA:24624"/>
        <dbReference type="Rhea" id="RHEA-COMP:9670"/>
        <dbReference type="Rhea" id="RHEA-COMP:9704"/>
        <dbReference type="ChEBI" id="CHEBI:15378"/>
        <dbReference type="ChEBI" id="CHEBI:30616"/>
        <dbReference type="ChEBI" id="CHEBI:33019"/>
        <dbReference type="ChEBI" id="CHEBI:57926"/>
        <dbReference type="ChEBI" id="CHEBI:78442"/>
        <dbReference type="ChEBI" id="CHEBI:78534"/>
        <dbReference type="ChEBI" id="CHEBI:456215"/>
        <dbReference type="EC" id="6.1.1.3"/>
    </reaction>
</comment>
<comment type="cofactor">
    <cofactor evidence="1">
        <name>Zn(2+)</name>
        <dbReference type="ChEBI" id="CHEBI:29105"/>
    </cofactor>
    <text evidence="1">Binds 1 zinc ion per subunit.</text>
</comment>
<comment type="subunit">
    <text evidence="1">Homodimer.</text>
</comment>
<comment type="subcellular location">
    <subcellularLocation>
        <location evidence="1">Cytoplasm</location>
    </subcellularLocation>
</comment>
<comment type="similarity">
    <text evidence="1">Belongs to the class-II aminoacyl-tRNA synthetase family.</text>
</comment>
<gene>
    <name evidence="1" type="primary">thrS</name>
    <name type="ordered locus">NWMN_1576</name>
</gene>
<protein>
    <recommendedName>
        <fullName evidence="1">Threonine--tRNA ligase</fullName>
        <ecNumber evidence="1">6.1.1.3</ecNumber>
    </recommendedName>
    <alternativeName>
        <fullName evidence="1">Threonyl-tRNA synthetase</fullName>
        <shortName evidence="1">ThrRS</shortName>
    </alternativeName>
</protein>
<name>SYT_STAAE</name>
<dbReference type="EC" id="6.1.1.3" evidence="1"/>
<dbReference type="EMBL" id="AP009351">
    <property type="protein sequence ID" value="BAF67848.1"/>
    <property type="molecule type" value="Genomic_DNA"/>
</dbReference>
<dbReference type="RefSeq" id="WP_000435132.1">
    <property type="nucleotide sequence ID" value="NZ_JBBIAE010000001.1"/>
</dbReference>
<dbReference type="SMR" id="A6QHL6"/>
<dbReference type="KEGG" id="sae:NWMN_1576"/>
<dbReference type="HOGENOM" id="CLU_008554_0_1_9"/>
<dbReference type="Proteomes" id="UP000006386">
    <property type="component" value="Chromosome"/>
</dbReference>
<dbReference type="GO" id="GO:0005737">
    <property type="term" value="C:cytoplasm"/>
    <property type="evidence" value="ECO:0007669"/>
    <property type="project" value="UniProtKB-SubCell"/>
</dbReference>
<dbReference type="GO" id="GO:0005524">
    <property type="term" value="F:ATP binding"/>
    <property type="evidence" value="ECO:0007669"/>
    <property type="project" value="UniProtKB-UniRule"/>
</dbReference>
<dbReference type="GO" id="GO:0140096">
    <property type="term" value="F:catalytic activity, acting on a protein"/>
    <property type="evidence" value="ECO:0007669"/>
    <property type="project" value="UniProtKB-ARBA"/>
</dbReference>
<dbReference type="GO" id="GO:0046872">
    <property type="term" value="F:metal ion binding"/>
    <property type="evidence" value="ECO:0007669"/>
    <property type="project" value="UniProtKB-KW"/>
</dbReference>
<dbReference type="GO" id="GO:0004829">
    <property type="term" value="F:threonine-tRNA ligase activity"/>
    <property type="evidence" value="ECO:0007669"/>
    <property type="project" value="UniProtKB-UniRule"/>
</dbReference>
<dbReference type="GO" id="GO:0016740">
    <property type="term" value="F:transferase activity"/>
    <property type="evidence" value="ECO:0007669"/>
    <property type="project" value="UniProtKB-ARBA"/>
</dbReference>
<dbReference type="GO" id="GO:0000049">
    <property type="term" value="F:tRNA binding"/>
    <property type="evidence" value="ECO:0007669"/>
    <property type="project" value="UniProtKB-KW"/>
</dbReference>
<dbReference type="GO" id="GO:0006435">
    <property type="term" value="P:threonyl-tRNA aminoacylation"/>
    <property type="evidence" value="ECO:0007669"/>
    <property type="project" value="UniProtKB-UniRule"/>
</dbReference>
<dbReference type="CDD" id="cd01667">
    <property type="entry name" value="TGS_ThrRS"/>
    <property type="match status" value="1"/>
</dbReference>
<dbReference type="CDD" id="cd00860">
    <property type="entry name" value="ThrRS_anticodon"/>
    <property type="match status" value="1"/>
</dbReference>
<dbReference type="CDD" id="cd00771">
    <property type="entry name" value="ThrRS_core"/>
    <property type="match status" value="1"/>
</dbReference>
<dbReference type="FunFam" id="3.10.20.30:FF:000005">
    <property type="entry name" value="Threonine--tRNA ligase"/>
    <property type="match status" value="1"/>
</dbReference>
<dbReference type="FunFam" id="3.30.54.20:FF:000002">
    <property type="entry name" value="Threonine--tRNA ligase"/>
    <property type="match status" value="1"/>
</dbReference>
<dbReference type="FunFam" id="3.30.930.10:FF:000002">
    <property type="entry name" value="Threonine--tRNA ligase"/>
    <property type="match status" value="1"/>
</dbReference>
<dbReference type="FunFam" id="3.40.50.800:FF:000001">
    <property type="entry name" value="Threonine--tRNA ligase"/>
    <property type="match status" value="1"/>
</dbReference>
<dbReference type="FunFam" id="3.30.980.10:FF:000005">
    <property type="entry name" value="Threonyl-tRNA synthetase, mitochondrial"/>
    <property type="match status" value="1"/>
</dbReference>
<dbReference type="Gene3D" id="3.10.20.30">
    <property type="match status" value="1"/>
</dbReference>
<dbReference type="Gene3D" id="3.30.54.20">
    <property type="match status" value="1"/>
</dbReference>
<dbReference type="Gene3D" id="3.40.50.800">
    <property type="entry name" value="Anticodon-binding domain"/>
    <property type="match status" value="1"/>
</dbReference>
<dbReference type="Gene3D" id="3.30.930.10">
    <property type="entry name" value="Bira Bifunctional Protein, Domain 2"/>
    <property type="match status" value="1"/>
</dbReference>
<dbReference type="Gene3D" id="3.30.980.10">
    <property type="entry name" value="Threonyl-trna Synthetase, Chain A, domain 2"/>
    <property type="match status" value="1"/>
</dbReference>
<dbReference type="HAMAP" id="MF_00184">
    <property type="entry name" value="Thr_tRNA_synth"/>
    <property type="match status" value="1"/>
</dbReference>
<dbReference type="InterPro" id="IPR002314">
    <property type="entry name" value="aa-tRNA-synt_IIb"/>
</dbReference>
<dbReference type="InterPro" id="IPR006195">
    <property type="entry name" value="aa-tRNA-synth_II"/>
</dbReference>
<dbReference type="InterPro" id="IPR045864">
    <property type="entry name" value="aa-tRNA-synth_II/BPL/LPL"/>
</dbReference>
<dbReference type="InterPro" id="IPR004154">
    <property type="entry name" value="Anticodon-bd"/>
</dbReference>
<dbReference type="InterPro" id="IPR036621">
    <property type="entry name" value="Anticodon-bd_dom_sf"/>
</dbReference>
<dbReference type="InterPro" id="IPR012675">
    <property type="entry name" value="Beta-grasp_dom_sf"/>
</dbReference>
<dbReference type="InterPro" id="IPR004095">
    <property type="entry name" value="TGS"/>
</dbReference>
<dbReference type="InterPro" id="IPR012676">
    <property type="entry name" value="TGS-like"/>
</dbReference>
<dbReference type="InterPro" id="IPR002320">
    <property type="entry name" value="Thr-tRNA-ligase_IIa"/>
</dbReference>
<dbReference type="InterPro" id="IPR018163">
    <property type="entry name" value="Thr/Ala-tRNA-synth_IIc_edit"/>
</dbReference>
<dbReference type="InterPro" id="IPR047246">
    <property type="entry name" value="ThrRS_anticodon"/>
</dbReference>
<dbReference type="InterPro" id="IPR033728">
    <property type="entry name" value="ThrRS_core"/>
</dbReference>
<dbReference type="InterPro" id="IPR012947">
    <property type="entry name" value="tRNA_SAD"/>
</dbReference>
<dbReference type="NCBIfam" id="TIGR00418">
    <property type="entry name" value="thrS"/>
    <property type="match status" value="1"/>
</dbReference>
<dbReference type="PANTHER" id="PTHR11451:SF56">
    <property type="entry name" value="THREONINE--TRNA LIGASE 1"/>
    <property type="match status" value="1"/>
</dbReference>
<dbReference type="PANTHER" id="PTHR11451">
    <property type="entry name" value="THREONINE-TRNA LIGASE"/>
    <property type="match status" value="1"/>
</dbReference>
<dbReference type="Pfam" id="PF03129">
    <property type="entry name" value="HGTP_anticodon"/>
    <property type="match status" value="1"/>
</dbReference>
<dbReference type="Pfam" id="PF02824">
    <property type="entry name" value="TGS"/>
    <property type="match status" value="1"/>
</dbReference>
<dbReference type="Pfam" id="PF00587">
    <property type="entry name" value="tRNA-synt_2b"/>
    <property type="match status" value="1"/>
</dbReference>
<dbReference type="Pfam" id="PF07973">
    <property type="entry name" value="tRNA_SAD"/>
    <property type="match status" value="1"/>
</dbReference>
<dbReference type="PRINTS" id="PR01047">
    <property type="entry name" value="TRNASYNTHTHR"/>
</dbReference>
<dbReference type="SMART" id="SM00863">
    <property type="entry name" value="tRNA_SAD"/>
    <property type="match status" value="1"/>
</dbReference>
<dbReference type="SUPFAM" id="SSF52954">
    <property type="entry name" value="Class II aaRS ABD-related"/>
    <property type="match status" value="1"/>
</dbReference>
<dbReference type="SUPFAM" id="SSF55681">
    <property type="entry name" value="Class II aaRS and biotin synthetases"/>
    <property type="match status" value="1"/>
</dbReference>
<dbReference type="SUPFAM" id="SSF81271">
    <property type="entry name" value="TGS-like"/>
    <property type="match status" value="1"/>
</dbReference>
<dbReference type="SUPFAM" id="SSF55186">
    <property type="entry name" value="ThrRS/AlaRS common domain"/>
    <property type="match status" value="1"/>
</dbReference>
<dbReference type="PROSITE" id="PS50862">
    <property type="entry name" value="AA_TRNA_LIGASE_II"/>
    <property type="match status" value="1"/>
</dbReference>
<dbReference type="PROSITE" id="PS51880">
    <property type="entry name" value="TGS"/>
    <property type="match status" value="1"/>
</dbReference>
<feature type="chain" id="PRO_1000071679" description="Threonine--tRNA ligase">
    <location>
        <begin position="1"/>
        <end position="645"/>
    </location>
</feature>
<feature type="domain" description="TGS" evidence="2">
    <location>
        <begin position="1"/>
        <end position="63"/>
    </location>
</feature>
<feature type="region of interest" description="Catalytic" evidence="1">
    <location>
        <begin position="242"/>
        <end position="540"/>
    </location>
</feature>
<feature type="binding site" evidence="1">
    <location>
        <position position="336"/>
    </location>
    <ligand>
        <name>Zn(2+)</name>
        <dbReference type="ChEBI" id="CHEBI:29105"/>
    </ligand>
</feature>
<feature type="binding site" evidence="1">
    <location>
        <position position="387"/>
    </location>
    <ligand>
        <name>Zn(2+)</name>
        <dbReference type="ChEBI" id="CHEBI:29105"/>
    </ligand>
</feature>
<feature type="binding site" evidence="1">
    <location>
        <position position="517"/>
    </location>
    <ligand>
        <name>Zn(2+)</name>
        <dbReference type="ChEBI" id="CHEBI:29105"/>
    </ligand>
</feature>
<accession>A6QHL6</accession>